<gene>
    <name evidence="1" type="primary">ycf3</name>
</gene>
<organism>
    <name type="scientific">Daucus carota</name>
    <name type="common">Wild carrot</name>
    <dbReference type="NCBI Taxonomy" id="4039"/>
    <lineage>
        <taxon>Eukaryota</taxon>
        <taxon>Viridiplantae</taxon>
        <taxon>Streptophyta</taxon>
        <taxon>Embryophyta</taxon>
        <taxon>Tracheophyta</taxon>
        <taxon>Spermatophyta</taxon>
        <taxon>Magnoliopsida</taxon>
        <taxon>eudicotyledons</taxon>
        <taxon>Gunneridae</taxon>
        <taxon>Pentapetalae</taxon>
        <taxon>asterids</taxon>
        <taxon>campanulids</taxon>
        <taxon>Apiales</taxon>
        <taxon>Apiaceae</taxon>
        <taxon>Apioideae</taxon>
        <taxon>Scandiceae</taxon>
        <taxon>Daucinae</taxon>
        <taxon>Daucus</taxon>
        <taxon>Daucus sect. Daucus</taxon>
    </lineage>
</organism>
<keyword id="KW-0150">Chloroplast</keyword>
<keyword id="KW-0472">Membrane</keyword>
<keyword id="KW-0602">Photosynthesis</keyword>
<keyword id="KW-0934">Plastid</keyword>
<keyword id="KW-0677">Repeat</keyword>
<keyword id="KW-0793">Thylakoid</keyword>
<keyword id="KW-0802">TPR repeat</keyword>
<feature type="chain" id="PRO_0000275615" description="Photosystem I assembly protein Ycf3">
    <location>
        <begin position="1"/>
        <end position="168"/>
    </location>
</feature>
<feature type="repeat" description="TPR 1">
    <location>
        <begin position="35"/>
        <end position="68"/>
    </location>
</feature>
<feature type="repeat" description="TPR 2">
    <location>
        <begin position="72"/>
        <end position="105"/>
    </location>
</feature>
<feature type="repeat" description="TPR 3">
    <location>
        <begin position="120"/>
        <end position="153"/>
    </location>
</feature>
<name>YCF3_DAUCA</name>
<accession>Q0G9W1</accession>
<sequence length="168" mass="19609">MPRSRINGNFIDKTFSIIANILLRIIPTTSGEKEAFTYYRDGMSAQSEGNYAEALQNYYEAMRLEIDPYDRSYILYNIGLIHTSNGEHTKALEYYFRALERNPFLPQAFNNMAVICHYRGEQAIRQGDSEIAEAWFDQAAEYWKQAIALTPGNYIEAHNWLKITRRFE</sequence>
<comment type="function">
    <text evidence="1">Essential for the assembly of the photosystem I (PSI) complex. May act as a chaperone-like factor to guide the assembly of the PSI subunits.</text>
</comment>
<comment type="subcellular location">
    <subcellularLocation>
        <location evidence="1">Plastid</location>
        <location evidence="1">Chloroplast thylakoid membrane</location>
        <topology evidence="1">Peripheral membrane protein</topology>
    </subcellularLocation>
</comment>
<comment type="similarity">
    <text evidence="1">Belongs to the Ycf3 family.</text>
</comment>
<evidence type="ECO:0000255" key="1">
    <source>
        <dbReference type="HAMAP-Rule" id="MF_00439"/>
    </source>
</evidence>
<proteinExistence type="inferred from homology"/>
<reference key="1">
    <citation type="journal article" date="2006" name="BMC Genomics">
        <title>Complete plastid genome sequence of Daucus carota: implications for biotechnology and phylogeny of angiosperms.</title>
        <authorList>
            <person name="Ruhlman T."/>
            <person name="Lee S.-B."/>
            <person name="Jansen R.K."/>
            <person name="Hostetler J.B."/>
            <person name="Tallon L.J."/>
            <person name="Town C.D."/>
            <person name="Daniell H."/>
        </authorList>
    </citation>
    <scope>NUCLEOTIDE SEQUENCE [LARGE SCALE GENOMIC DNA]</scope>
    <source>
        <strain>cv. Danvers Half-long</strain>
    </source>
</reference>
<geneLocation type="chloroplast"/>
<dbReference type="EMBL" id="DQ898156">
    <property type="protein sequence ID" value="ABI32425.1"/>
    <property type="molecule type" value="Genomic_DNA"/>
</dbReference>
<dbReference type="RefSeq" id="YP_740118.1">
    <property type="nucleotide sequence ID" value="NC_008325.1"/>
</dbReference>
<dbReference type="SMR" id="Q0G9W1"/>
<dbReference type="GeneID" id="4266736"/>
<dbReference type="OMA" id="VYYRDGM"/>
<dbReference type="GO" id="GO:0009535">
    <property type="term" value="C:chloroplast thylakoid membrane"/>
    <property type="evidence" value="ECO:0007669"/>
    <property type="project" value="UniProtKB-SubCell"/>
</dbReference>
<dbReference type="GO" id="GO:0015979">
    <property type="term" value="P:photosynthesis"/>
    <property type="evidence" value="ECO:0007669"/>
    <property type="project" value="UniProtKB-UniRule"/>
</dbReference>
<dbReference type="FunFam" id="1.25.40.10:FF:000004">
    <property type="entry name" value="Photosystem I assembly protein Ycf3"/>
    <property type="match status" value="1"/>
</dbReference>
<dbReference type="Gene3D" id="1.25.40.10">
    <property type="entry name" value="Tetratricopeptide repeat domain"/>
    <property type="match status" value="1"/>
</dbReference>
<dbReference type="HAMAP" id="MF_00439">
    <property type="entry name" value="Ycf3"/>
    <property type="match status" value="1"/>
</dbReference>
<dbReference type="InterPro" id="IPR022818">
    <property type="entry name" value="PSI_Ycf3_assembly"/>
</dbReference>
<dbReference type="InterPro" id="IPR011990">
    <property type="entry name" value="TPR-like_helical_dom_sf"/>
</dbReference>
<dbReference type="InterPro" id="IPR019734">
    <property type="entry name" value="TPR_rpt"/>
</dbReference>
<dbReference type="InterPro" id="IPR051685">
    <property type="entry name" value="Ycf3/AcsC/BcsC/TPR_MFPF"/>
</dbReference>
<dbReference type="NCBIfam" id="NF002725">
    <property type="entry name" value="PRK02603.1"/>
    <property type="match status" value="1"/>
</dbReference>
<dbReference type="PANTHER" id="PTHR44943">
    <property type="entry name" value="CELLULOSE SYNTHASE OPERON PROTEIN C"/>
    <property type="match status" value="1"/>
</dbReference>
<dbReference type="PANTHER" id="PTHR44943:SF8">
    <property type="entry name" value="TPR REPEAT-CONTAINING PROTEIN MJ0263"/>
    <property type="match status" value="1"/>
</dbReference>
<dbReference type="Pfam" id="PF00515">
    <property type="entry name" value="TPR_1"/>
    <property type="match status" value="1"/>
</dbReference>
<dbReference type="SMART" id="SM00028">
    <property type="entry name" value="TPR"/>
    <property type="match status" value="3"/>
</dbReference>
<dbReference type="SUPFAM" id="SSF48452">
    <property type="entry name" value="TPR-like"/>
    <property type="match status" value="1"/>
</dbReference>
<dbReference type="PROSITE" id="PS50005">
    <property type="entry name" value="TPR"/>
    <property type="match status" value="3"/>
</dbReference>
<dbReference type="PROSITE" id="PS50293">
    <property type="entry name" value="TPR_REGION"/>
    <property type="match status" value="2"/>
</dbReference>
<protein>
    <recommendedName>
        <fullName evidence="1">Photosystem I assembly protein Ycf3</fullName>
    </recommendedName>
</protein>